<accession>Q306W7</accession>
<protein>
    <recommendedName>
        <fullName>Structural polyprotein</fullName>
    </recommendedName>
    <alternativeName>
        <fullName>p130</fullName>
    </alternativeName>
    <component>
        <recommendedName>
            <fullName>Capsid protein</fullName>
            <ecNumber evidence="2">3.4.21.90</ecNumber>
        </recommendedName>
        <alternativeName>
            <fullName>Coat protein</fullName>
            <shortName>C</shortName>
        </alternativeName>
    </component>
    <component>
        <recommendedName>
            <fullName>Precursor of protein E3/E2</fullName>
        </recommendedName>
        <alternativeName>
            <fullName>p62</fullName>
        </alternativeName>
        <alternativeName>
            <fullName>pE2</fullName>
        </alternativeName>
    </component>
    <component>
        <recommendedName>
            <fullName>Assembly protein E3</fullName>
        </recommendedName>
    </component>
    <component>
        <recommendedName>
            <fullName>Spike glycoprotein E2</fullName>
        </recommendedName>
        <alternativeName>
            <fullName>E2 envelope glycoprotein</fullName>
        </alternativeName>
    </component>
    <component>
        <recommendedName>
            <fullName>6K protein</fullName>
        </recommendedName>
    </component>
    <component>
        <recommendedName>
            <fullName>Spike glycoprotein E1</fullName>
        </recommendedName>
        <alternativeName>
            <fullName>E1 envelope glycoprotein</fullName>
        </alternativeName>
    </component>
</protein>
<name>POLS_EEEV8</name>
<keyword id="KW-0167">Capsid protein</keyword>
<keyword id="KW-0165">Cleavage on pair of basic residues</keyword>
<keyword id="KW-1015">Disulfide bond</keyword>
<keyword id="KW-1262">Eukaryotic host gene expression shutoff by virus</keyword>
<keyword id="KW-1191">Eukaryotic host transcription shutoff by virus</keyword>
<keyword id="KW-1170">Fusion of virus membrane with host endosomal membrane</keyword>
<keyword id="KW-1168">Fusion of virus membrane with host membrane</keyword>
<keyword id="KW-0325">Glycoprotein</keyword>
<keyword id="KW-1032">Host cell membrane</keyword>
<keyword id="KW-1035">Host cytoplasm</keyword>
<keyword id="KW-1190">Host gene expression shutoff by virus</keyword>
<keyword id="KW-1043">Host membrane</keyword>
<keyword id="KW-1048">Host nucleus</keyword>
<keyword id="KW-0945">Host-virus interaction</keyword>
<keyword id="KW-0378">Hydrolase</keyword>
<keyword id="KW-0449">Lipoprotein</keyword>
<keyword id="KW-0472">Membrane</keyword>
<keyword id="KW-0564">Palmitate</keyword>
<keyword id="KW-0597">Phosphoprotein</keyword>
<keyword id="KW-0645">Protease</keyword>
<keyword id="KW-0694">RNA-binding</keyword>
<keyword id="KW-0720">Serine protease</keyword>
<keyword id="KW-1144">T=4 icosahedral capsid protein</keyword>
<keyword id="KW-0812">Transmembrane</keyword>
<keyword id="KW-1133">Transmembrane helix</keyword>
<keyword id="KW-1161">Viral attachment to host cell</keyword>
<keyword id="KW-1162">Viral penetration into host cytoplasm</keyword>
<keyword id="KW-0946">Virion</keyword>
<keyword id="KW-1160">Virus entry into host cell</keyword>
<organismHost>
    <name type="scientific">Aedes</name>
    <dbReference type="NCBI Taxonomy" id="7158"/>
</organismHost>
<organismHost>
    <name type="scientific">Homo sapiens</name>
    <name type="common">Human</name>
    <dbReference type="NCBI Taxonomy" id="9606"/>
</organismHost>
<organismHost>
    <name type="scientific">Passeriformes</name>
    <dbReference type="NCBI Taxonomy" id="9126"/>
</organismHost>
<feature type="chain" id="PRO_0000238724" description="Capsid protein" evidence="1">
    <location>
        <begin position="1"/>
        <end position="261"/>
    </location>
</feature>
<feature type="chain" id="PRO_0000238725" description="Precursor of protein E3/E2" evidence="1">
    <location>
        <begin position="262"/>
        <end position="744"/>
    </location>
</feature>
<feature type="chain" id="PRO_0000238726" description="Assembly protein E3" evidence="1">
    <location>
        <begin position="262"/>
        <end position="324"/>
    </location>
</feature>
<feature type="chain" id="PRO_0000238727" description="Spike glycoprotein E2" evidence="1">
    <location>
        <begin position="325"/>
        <end position="744"/>
    </location>
</feature>
<feature type="chain" id="PRO_0000238728" description="6K protein" evidence="1">
    <location>
        <begin position="745"/>
        <end position="801"/>
    </location>
</feature>
<feature type="chain" id="PRO_0000238729" description="Spike glycoprotein E1" evidence="1">
    <location>
        <begin position="802"/>
        <end position="1242"/>
    </location>
</feature>
<feature type="topological domain" description="Extracellular" evidence="8">
    <location>
        <begin position="325"/>
        <end position="688"/>
    </location>
</feature>
<feature type="transmembrane region" description="Helical" evidence="8">
    <location>
        <begin position="689"/>
        <end position="709"/>
    </location>
</feature>
<feature type="topological domain" description="Cytoplasmic" evidence="8">
    <location>
        <begin position="710"/>
        <end position="744"/>
    </location>
</feature>
<feature type="topological domain" description="Extracellular" evidence="8">
    <location>
        <begin position="745"/>
        <end position="759"/>
    </location>
</feature>
<feature type="transmembrane region" description="Helical" evidence="8">
    <location>
        <begin position="760"/>
        <end position="780"/>
    </location>
</feature>
<feature type="transmembrane region" description="Helical" evidence="8">
    <location>
        <begin position="781"/>
        <end position="801"/>
    </location>
</feature>
<feature type="topological domain" description="Extracellular" evidence="8">
    <location>
        <begin position="802"/>
        <end position="1218"/>
    </location>
</feature>
<feature type="transmembrane region" description="Helical" evidence="8">
    <location>
        <begin position="1219"/>
        <end position="1239"/>
    </location>
</feature>
<feature type="topological domain" description="Cytoplasmic" evidence="8">
    <location>
        <begin position="1240"/>
        <end position="1242"/>
    </location>
</feature>
<feature type="domain" description="Peptidase S3" evidence="9">
    <location>
        <begin position="112"/>
        <end position="261"/>
    </location>
</feature>
<feature type="region of interest" description="Disordered" evidence="10">
    <location>
        <begin position="1"/>
        <end position="104"/>
    </location>
</feature>
<feature type="region of interest" description="Necessary for nucleocapsid assembly and virus assembly" evidence="4">
    <location>
        <begin position="1"/>
        <end position="36"/>
    </location>
</feature>
<feature type="region of interest" description="Host transcription inhibition" evidence="4">
    <location>
        <begin position="37"/>
        <end position="70"/>
    </location>
</feature>
<feature type="region of interest" description="Binding to the viral RNA" evidence="5">
    <location>
        <begin position="83"/>
        <end position="113"/>
    </location>
</feature>
<feature type="region of interest" description="Ribosome-binding" evidence="5">
    <location>
        <begin position="98"/>
        <end position="112"/>
    </location>
</feature>
<feature type="region of interest" description="Functions as an uncleaved signal peptide for the precursor of protein E3/E2" evidence="2">
    <location>
        <begin position="262"/>
        <end position="273"/>
    </location>
</feature>
<feature type="region of interest" description="Transient transmembrane before p62-6K protein processing" evidence="8">
    <location>
        <begin position="717"/>
        <end position="737"/>
    </location>
</feature>
<feature type="region of interest" description="E1 fusion peptide loop" evidence="7">
    <location>
        <begin position="885"/>
        <end position="902"/>
    </location>
</feature>
<feature type="short sequence motif" description="Supraphysiological nuclear export signal" evidence="4">
    <location>
        <begin position="44"/>
        <end position="51"/>
    </location>
</feature>
<feature type="short sequence motif" description="Nuclear localization signal" evidence="4">
    <location>
        <begin position="67"/>
        <end position="70"/>
    </location>
</feature>
<feature type="compositionally biased region" description="Basic residues" evidence="10">
    <location>
        <begin position="66"/>
        <end position="104"/>
    </location>
</feature>
<feature type="active site" description="Charge relay system" evidence="9">
    <location>
        <position position="138"/>
    </location>
</feature>
<feature type="active site" description="Charge relay system" evidence="9">
    <location>
        <position position="160"/>
    </location>
</feature>
<feature type="active site" description="Charge relay system" evidence="9">
    <location>
        <position position="212"/>
    </location>
</feature>
<feature type="site" description="Involved in dimerization of the capsid protein" evidence="6">
    <location>
        <position position="186"/>
    </location>
</feature>
<feature type="site" description="Involved in dimerization of the capsid protein" evidence="6">
    <location>
        <position position="219"/>
    </location>
</feature>
<feature type="site" description="Cleavage; by autolysis" evidence="2">
    <location>
        <begin position="261"/>
        <end position="262"/>
    </location>
</feature>
<feature type="site" description="Cleavage; by host furin" evidence="1">
    <location>
        <begin position="324"/>
        <end position="325"/>
    </location>
</feature>
<feature type="site" description="Cleavage; by host signal peptidase" evidence="1">
    <location>
        <begin position="744"/>
        <end position="745"/>
    </location>
</feature>
<feature type="site" description="Cleavage; by host signal peptidase" evidence="1">
    <location>
        <begin position="801"/>
        <end position="802"/>
    </location>
</feature>
<feature type="modified residue" description="Phosphoserine" evidence="4">
    <location>
        <position position="110"/>
    </location>
</feature>
<feature type="modified residue" description="Phosphothreonine" evidence="4">
    <location>
        <position position="113"/>
    </location>
</feature>
<feature type="lipid moiety-binding region" description="S-palmitoyl cysteine; by host" evidence="1">
    <location>
        <position position="717"/>
    </location>
</feature>
<feature type="lipid moiety-binding region" description="S-palmitoyl cysteine; by host" evidence="1">
    <location>
        <position position="737"/>
    </location>
</feature>
<feature type="lipid moiety-binding region" description="S-palmitoyl cysteine; by host" evidence="1">
    <location>
        <position position="738"/>
    </location>
</feature>
<feature type="glycosylation site" description="N-linked (GlcNAc...) asparagine; by host" evidence="8">
    <location>
        <position position="272"/>
    </location>
</feature>
<feature type="disulfide bond" evidence="1">
    <location>
        <begin position="850"/>
        <end position="915"/>
    </location>
</feature>
<feature type="disulfide bond" evidence="1">
    <location>
        <begin position="863"/>
        <end position="895"/>
    </location>
</feature>
<feature type="disulfide bond" evidence="1">
    <location>
        <begin position="864"/>
        <end position="897"/>
    </location>
</feature>
<feature type="disulfide bond" evidence="1">
    <location>
        <begin position="869"/>
        <end position="879"/>
    </location>
</feature>
<feature type="disulfide bond" evidence="1">
    <location>
        <begin position="1061"/>
        <end position="1073"/>
    </location>
</feature>
<feature type="disulfide bond" evidence="1">
    <location>
        <begin position="1103"/>
        <end position="1178"/>
    </location>
</feature>
<feature type="disulfide bond" evidence="1">
    <location>
        <begin position="1108"/>
        <end position="1182"/>
    </location>
</feature>
<feature type="disulfide bond" evidence="1">
    <location>
        <begin position="1130"/>
        <end position="1172"/>
    </location>
</feature>
<comment type="function">
    <molecule>Capsid protein</molecule>
    <text evidence="2 3 4 5">Forms an icosahedral capsid with a T=4 symmetry composed of 240 copies of the capsid protein surrounded by a lipid membrane through which penetrate 80 spikes composed of trimers of E1-E2 heterodimers (By similarity). The capsid protein binds to the viral RNA genome at a site adjacent to a ribosome binding site for viral genome translation following genome release (By similarity). Possesses a protease activity that results in its autocatalytic cleavage from the nascent structural protein (By similarity). Following its self-cleavage, the capsid protein transiently associates with ribosomes, and within several minutes the protein binds to viral RNA and rapidly assembles into icosahedric core particles (By similarity). The resulting nucleocapsid eventually associates with the cytoplasmic domain of the spike glycoprotein E2 at the cell membrane, leading to budding and formation of mature virions (By similarity). In case of infection, new virions attach to target cells and after clathrin-mediated endocytosis their membrane fuses with the host endosomal membrane (By similarity). This leads to the release of the nucleocapsid into the cytoplasm, followed by an uncoating event necessary for the genomic RNA to become accessible (By similarity). The uncoating might be triggered by the interaction of capsid proteins with ribosomes (By similarity). Binding of ribosomes would release the genomic RNA since the same region is genomic RNA-binding and ribosome-binding (By similarity). Specifically inhibits interleukin-1 receptor-associated kinase 1/IRAK1-dependent signaling during viral entry, representing a means by which the alphaviruses may evade innate immune detection and activation prior to viral gene expression (By similarity). Inhibits host transcription (By similarity). Forms a tetrameric complex with XPO1/CRM1 and the nuclear import receptor importin (By similarity). This complex blocks the central channel of host nuclear pores thereby inhibiting the receptor-mediated nuclear transport and thus the host mRNA and rRNA transcription (By similarity). The inhibition of transcription is linked to a cytopathic effect on the host cell (By similarity).</text>
</comment>
<comment type="function">
    <molecule>Assembly protein E3</molecule>
    <text evidence="2">Provides the signal sequence for the translocation of the precursor of protein E3/E2 to the host endoplasmic reticulum. Furin-cleaved E3 remains associated with spike glycoprotein E1 and mediates pH protection of the latter during the transport via the secretory pathway. After virion release from the host cell, the assembly protein E3 is gradually released in the extracellular space.</text>
</comment>
<comment type="function">
    <molecule>Spike glycoprotein E2</molecule>
    <text evidence="2">Plays a role in viral attachment to target host cell, by binding to the cell receptor. Synthesized as a p62 precursor which is processed by furin at the cell membrane just before virion budding, giving rise to E2-E1 heterodimer. The p62-E1 heterodimer is stable, whereas E2-E1 is unstable and dissociate at low pH. p62 is processed at the last step, presumably to avoid E1 fusion activation before its final export to cell surface. E2 C-terminus contains a transitory transmembrane that would be disrupted by palmitoylation, resulting in reorientation of the C-terminal tail from lumenal to cytoplasmic side. This step is critical since E2 C-terminus is involved in budding by interacting with capsid proteins. This release of E2 C-terminus in cytoplasm occurs lately in protein export, and precludes premature assembly of particles at the endoplasmic reticulum membrane.</text>
</comment>
<comment type="function">
    <molecule>6K protein</molecule>
    <text evidence="2">Constitutive membrane protein involved in virus glycoprotein processing, cell permeabilization, and the budding of viral particles. Disrupts the calcium homeostasis of the cell, probably at the endoplasmic reticulum level. This leads to cytoplasmic calcium elevation. Because of its lipophilic properties, the 6K protein is postulated to influence the selection of lipids that interact with the transmembrane domains of the glycoproteins, which, in turn, affects the deformability of the bilayer required for the extreme curvature that occurs as budding proceeds. Present in low amount in virions, about 3% compared to viral glycoproteins.</text>
</comment>
<comment type="function">
    <molecule>Spike glycoprotein E1</molecule>
    <text evidence="2">Class II viral fusion protein. Fusion activity is inactive as long as E1 is bound to E2 in mature virion. After virus attachment to target cell and endocytosis, acidification of the endosome would induce dissociation of E1/E2 heterodimer and concomitant trimerization of the E1 subunits. This E1 trimer is fusion active, and promotes release of viral nucleocapsid in cytoplasm after endosome and viral membrane fusion. Efficient fusion requires the presence of cholesterol and sphingolipid in the target membrane. Fusion is optimal at levels of about 1 molecule of cholesterol per 2 molecules of phospholipids, and is specific for sterols containing a 3-beta-hydroxyl group.</text>
</comment>
<comment type="catalytic activity">
    <reaction evidence="3">
        <text>Autocatalytic release of the core protein from the N-terminus of the togavirus structural polyprotein by hydrolysis of a -Trp-|-Ser- bond.</text>
        <dbReference type="EC" id="3.4.21.90"/>
    </reaction>
</comment>
<comment type="subunit">
    <molecule>Capsid protein</molecule>
    <text evidence="2 3 4 7">Part of a tetrameric complex composed of host CRM1, host importin alpha/beta dimer and the viral capsid; this complex blocks the receptor-mediated transport through the nuclear pore (By similarity). Interacts with host phosphatase PPP1CA; this interaction dephosphorylates the capsid protein, which increases its ability to bind to the viral genome (By similarity). Interacts with host karyopherin KPNA4; this interaction allows the nuclear import of the viral capsid protein (By similarity). Interacts with spike glycoprotein E2 (By similarity). Interacts with host IRAK1; the interaction leads to inhibition of IRAK1-dependent signaling (By similarity).</text>
</comment>
<comment type="subunit">
    <molecule>Precursor of protein E3/E2</molecule>
    <text evidence="2 3 4">The precursor of protein E3/E2 and E1 form a heterodimer shortly after synthesis (By similarity).</text>
</comment>
<comment type="subunit">
    <molecule>Spike glycoprotein E1</molecule>
    <text evidence="2 3 4">The precursor of protein E3/E2 and E1 form a heterodimer shortly after synthesis (By similarity). Processing of the precursor of protein E3/E2 into E2 and E3 results in a heterodimer of the spike glycoproteins E2 and E1 (By similarity). Spike at virion surface are constituted of three E2-E1 heterodimers (By similarity). After target cell attachment and endocytosis, E1 change conformation to form homotrimers (By similarity). Interacts with 6K protein (By similarity).</text>
</comment>
<comment type="subunit">
    <molecule>Spike glycoprotein E2</molecule>
    <text evidence="2 3 4">Processing of the precursor of protein E3/E2 into E2 and E3 results in a heterodimer of the spike glycoproteins E2 and E1 (By similarity). Spike at virion surface are constituted of three E2-E1 heterodimers (By similarity). Interacts with 6K protein (By similarity).</text>
</comment>
<comment type="subunit">
    <molecule>6K protein</molecule>
    <text evidence="2 3 4">Interacts with spike glycoprotein E1 (By similarity). Interacts with spike glycoprotein E2 (By similarity).</text>
</comment>
<comment type="subcellular location">
    <molecule>Capsid protein</molecule>
    <subcellularLocation>
        <location evidence="3">Virion</location>
    </subcellularLocation>
    <subcellularLocation>
        <location evidence="4">Host cytoplasm</location>
    </subcellularLocation>
    <subcellularLocation>
        <location evidence="3">Host cell membrane</location>
    </subcellularLocation>
    <subcellularLocation>
        <location evidence="4">Host nucleus</location>
    </subcellularLocation>
</comment>
<comment type="subcellular location">
    <molecule>Spike glycoprotein E2</molecule>
    <subcellularLocation>
        <location evidence="7">Virion membrane</location>
        <topology evidence="8">Single-pass type I membrane protein</topology>
    </subcellularLocation>
    <subcellularLocation>
        <location evidence="3">Host cell membrane</location>
        <topology evidence="7">Single-pass type I membrane protein</topology>
    </subcellularLocation>
</comment>
<comment type="subcellular location">
    <molecule>6K protein</molecule>
    <subcellularLocation>
        <location evidence="3">Host cell membrane</location>
        <topology evidence="8">Multi-pass membrane protein</topology>
    </subcellularLocation>
    <subcellularLocation>
        <location evidence="3">Virion membrane</location>
        <topology evidence="8">Multi-pass membrane protein</topology>
    </subcellularLocation>
</comment>
<comment type="subcellular location">
    <molecule>Spike glycoprotein E1</molecule>
    <subcellularLocation>
        <location evidence="7">Virion membrane</location>
        <topology evidence="8">Single-pass type I membrane protein</topology>
    </subcellularLocation>
    <subcellularLocation>
        <location evidence="3 7">Host cell membrane</location>
        <topology evidence="8">Single-pass type I membrane protein</topology>
    </subcellularLocation>
</comment>
<comment type="domain">
    <text evidence="2">Structural polyprotein: As soon as the capsid protein has been autocleaved, an internal uncleaved signal peptide directs the remaining polyprotein to the endoplasmic reticulum.</text>
</comment>
<comment type="domain">
    <molecule>Capsid protein</molecule>
    <text evidence="3 4">The very N-terminus plays a role in the particle assembly process (By similarity). The N-terminus also contains a nuclear localization signal and a supraphysiological nuclear export signal (supraNES), which is an unusually strong NES that mediates host CRM1 binding in the absence of RanGTP and thus can bind CRM1, not only in the nucleus, but also in the cytoplasm (By similarity). The C-terminus functions as a protease during translation to cleave itself from the translating structural polyprotein (By similarity).</text>
</comment>
<comment type="PTM">
    <text evidence="2">Structural polyprotein: Specific enzymatic cleavages in vivo yield mature proteins. Capsid protein is auto-cleaved during polyprotein translation, unmasking a signal peptide at the N-terminus of the precursor of E3/E2. The remaining polyprotein is then targeted to the host endoplasmic reticulum, where host signal peptidase cleaves it into pE2, 6K and E1 proteins. pE2 is further processed to mature E3 and E2 by host furin in trans-Golgi vesicle.</text>
</comment>
<comment type="PTM">
    <molecule>Capsid protein</molecule>
    <text evidence="4">Phosphorylated on serine and threonine residues.</text>
</comment>
<comment type="PTM">
    <molecule>Spike glycoprotein E2</molecule>
    <text evidence="2">Palmitoylated via thioester bonds. These palmitoylations may induce disruption of the C-terminus transmembrane. This would result in the reorientation of E2 C-terminus from lumenal to cytoplasmic side.</text>
</comment>
<comment type="PTM">
    <molecule>Spike glycoprotein E1</molecule>
    <text evidence="2">N-glycosylated.</text>
</comment>
<comment type="PTM">
    <molecule>Spike glycoprotein E2</molecule>
    <text evidence="2">N-glycosylated.</text>
</comment>
<comment type="PTM">
    <molecule>Assembly protein E3</molecule>
    <text evidence="2">N-glycosylated.</text>
</comment>
<comment type="PTM">
    <molecule>6K protein</molecule>
    <text evidence="2">Palmitoylated via thioester bonds.</text>
</comment>
<comment type="miscellaneous">
    <text evidence="6">Structural polyprotein: Translated from a subgenomic RNA synthesized during togavirus replication.</text>
</comment>
<sequence length="1242" mass="137312">MFPYPTLNYPPMAPVNPMAYRDPNPPRRRWRPFRPPLAAQIEDLRRSIANLTFKQRAPNPPAGPPAKRKKPAPKPKPAAPKKKRQPPPAKKQKRKQKPGKRQRMCMKLESDKTFPIMLNGQVNGYACVVGGRVFKPLHVEGKIDNEQLAAIKLKKASIYDLEYGDVPQCMKSDTLQYTSEKPPGFYNWHHGAVQYENNRFTVPRGVGGKGDSGRPILDNRGRVVAIVLGGANEGSRTALSVVTWNQKGVTVKDTPEGSEPWSLTTVMCVLANITFPCDQPPCMPCCYEKNPHETLSMLEQNYDSQAYDLLLDAAVKCNGRRTRRDLETHFTQYKLARPYIADCSNCGHGRCDSPIAIEDIRGDAHAGYIRIQTSAMFGLKSDGVDLAYMSFMNGKTLKAIKIEHLYARTSAPCSLVSYHGYYILAQCPPGDTVTVGFQDGAIKHMCTIAHKVEFKPVGREKYRHPPEHGVELPCTKYTHKRADQGHYVEMHQPGLVADHSLLSMSSTKVKITVPSGSQVKYYCKCPDVKEGTTGSDYTTACTDLKQCRAYLIDNKKWVYNSGKLPRGEGETFKGKLHVPFVPVTSKCTATLAPEPLVEHKHRSLVLHLHPEHPTLLTTRALGSNARPTRQWIEQPTTVNFTVTGEGFEYTWGNHPPKRVWAQESGEGNPHGWPHEIVIYYYNRYPMTTVIGLCTCVAIIMVSCVTSVWLLCRTRNLCITPYRLAPNAQVPILLAVLCCVKPTRADDTLQVLNYLWNNNQNFFWMQTLIPLAALIVCMRMLRCLLCCGPAFLLVCGALGAAAYEHAAVMPNKVGIPYKALVERPGYAPVHLQIQLVTTKIIPSANLEYITCKYKTKVPSPVVKCCGSTQCSAKSLPDYQCQVFTGVYPFMWGGAYCFCDTENTQMSEVYIERAEECSVDQAKAYKVHTGTVQAVVNITYGSVSWRSADVYVNGETPAKIGDAKLTIGPLSSAWSPFDSKVVVYGHEVYNYDFPEYGTGKAGSFGDLQSRTLTSNDLYANTNLKLQRPQPGVVHTPYTQAPSGFERWKKDRGAPLNDIAPFGCTIALDPLRAENCAVGNIPLSIDIPDAAFTRIAETPTVSDLECKVTECTYASDFGGIATISYKASKAGNCPIHSPSGIAVIKENDVTLADSGAFTFHFSTASIHPAFKMQVCTSVVTCKGDCKPPKDHIVDYPAQHTETYTSAVSATAWSWLKVLVGSTSAFIVLGLIATAVVALVLFTHRH</sequence>
<dbReference type="EC" id="3.4.21.90" evidence="2"/>
<dbReference type="EMBL" id="DQ241303">
    <property type="protein sequence ID" value="ABB45866.1"/>
    <property type="molecule type" value="Genomic_RNA"/>
</dbReference>
<dbReference type="SMR" id="Q306W7"/>
<dbReference type="MEROPS" id="S03.001"/>
<dbReference type="Proteomes" id="UP000008275">
    <property type="component" value="Segment"/>
</dbReference>
<dbReference type="GO" id="GO:0030430">
    <property type="term" value="C:host cell cytoplasm"/>
    <property type="evidence" value="ECO:0007669"/>
    <property type="project" value="UniProtKB-SubCell"/>
</dbReference>
<dbReference type="GO" id="GO:0042025">
    <property type="term" value="C:host cell nucleus"/>
    <property type="evidence" value="ECO:0007669"/>
    <property type="project" value="UniProtKB-SubCell"/>
</dbReference>
<dbReference type="GO" id="GO:0020002">
    <property type="term" value="C:host cell plasma membrane"/>
    <property type="evidence" value="ECO:0007669"/>
    <property type="project" value="UniProtKB-SubCell"/>
</dbReference>
<dbReference type="GO" id="GO:0016020">
    <property type="term" value="C:membrane"/>
    <property type="evidence" value="ECO:0007669"/>
    <property type="project" value="UniProtKB-KW"/>
</dbReference>
<dbReference type="GO" id="GO:0039619">
    <property type="term" value="C:T=4 icosahedral viral capsid"/>
    <property type="evidence" value="ECO:0007669"/>
    <property type="project" value="UniProtKB-KW"/>
</dbReference>
<dbReference type="GO" id="GO:0055036">
    <property type="term" value="C:virion membrane"/>
    <property type="evidence" value="ECO:0007669"/>
    <property type="project" value="UniProtKB-SubCell"/>
</dbReference>
<dbReference type="GO" id="GO:0003723">
    <property type="term" value="F:RNA binding"/>
    <property type="evidence" value="ECO:0007669"/>
    <property type="project" value="UniProtKB-KW"/>
</dbReference>
<dbReference type="GO" id="GO:0004252">
    <property type="term" value="F:serine-type endopeptidase activity"/>
    <property type="evidence" value="ECO:0007669"/>
    <property type="project" value="InterPro"/>
</dbReference>
<dbReference type="GO" id="GO:0005198">
    <property type="term" value="F:structural molecule activity"/>
    <property type="evidence" value="ECO:0007669"/>
    <property type="project" value="InterPro"/>
</dbReference>
<dbReference type="GO" id="GO:0039654">
    <property type="term" value="P:fusion of virus membrane with host endosome membrane"/>
    <property type="evidence" value="ECO:0007669"/>
    <property type="project" value="UniProtKB-KW"/>
</dbReference>
<dbReference type="GO" id="GO:0006508">
    <property type="term" value="P:proteolysis"/>
    <property type="evidence" value="ECO:0007669"/>
    <property type="project" value="UniProtKB-KW"/>
</dbReference>
<dbReference type="GO" id="GO:0046718">
    <property type="term" value="P:symbiont entry into host cell"/>
    <property type="evidence" value="ECO:0007669"/>
    <property type="project" value="UniProtKB-KW"/>
</dbReference>
<dbReference type="GO" id="GO:0039657">
    <property type="term" value="P:symbiont-mediated suppression of host gene expression"/>
    <property type="evidence" value="ECO:0007669"/>
    <property type="project" value="UniProtKB-KW"/>
</dbReference>
<dbReference type="GO" id="GO:0039722">
    <property type="term" value="P:symbiont-mediated suppression of host toll-like receptor signaling pathway"/>
    <property type="evidence" value="ECO:0000250"/>
    <property type="project" value="UniProtKB"/>
</dbReference>
<dbReference type="GO" id="GO:0019062">
    <property type="term" value="P:virion attachment to host cell"/>
    <property type="evidence" value="ECO:0007669"/>
    <property type="project" value="UniProtKB-KW"/>
</dbReference>
<dbReference type="FunFam" id="1.10.287.2230:FF:000001">
    <property type="entry name" value="Structural polyprotein"/>
    <property type="match status" value="1"/>
</dbReference>
<dbReference type="FunFam" id="2.40.10.10:FF:000075">
    <property type="entry name" value="Structural polyprotein"/>
    <property type="match status" value="1"/>
</dbReference>
<dbReference type="FunFam" id="2.40.10.10:FF:000076">
    <property type="entry name" value="Structural polyprotein"/>
    <property type="match status" value="1"/>
</dbReference>
<dbReference type="FunFam" id="2.60.40.350:FF:000002">
    <property type="entry name" value="Structural polyprotein"/>
    <property type="match status" value="1"/>
</dbReference>
<dbReference type="FunFam" id="2.60.98.10:FF:000002">
    <property type="entry name" value="Structural polyprotein"/>
    <property type="match status" value="1"/>
</dbReference>
<dbReference type="FunFam" id="2.60.98.10:FF:000003">
    <property type="entry name" value="Structural polyprotein"/>
    <property type="match status" value="1"/>
</dbReference>
<dbReference type="Gene3D" id="1.10.287.2230">
    <property type="match status" value="1"/>
</dbReference>
<dbReference type="Gene3D" id="2.60.40.350">
    <property type="match status" value="1"/>
</dbReference>
<dbReference type="Gene3D" id="2.60.40.3200">
    <property type="entry name" value="Alphavirus E2 glycoprotein, A domain"/>
    <property type="match status" value="1"/>
</dbReference>
<dbReference type="Gene3D" id="2.60.40.4310">
    <property type="entry name" value="Alphavirus E2 glycoprotein, domain B"/>
    <property type="match status" value="1"/>
</dbReference>
<dbReference type="Gene3D" id="2.60.40.2400">
    <property type="entry name" value="Alphavirus E2 glycoprotein, domain C"/>
    <property type="match status" value="1"/>
</dbReference>
<dbReference type="Gene3D" id="2.60.98.10">
    <property type="entry name" value="Tick-borne Encephalitis virus Glycoprotein, domain 1"/>
    <property type="match status" value="3"/>
</dbReference>
<dbReference type="Gene3D" id="2.40.10.10">
    <property type="entry name" value="Trypsin-like serine proteases"/>
    <property type="match status" value="2"/>
</dbReference>
<dbReference type="InterPro" id="IPR002548">
    <property type="entry name" value="Alpha_E1_glycop"/>
</dbReference>
<dbReference type="InterPro" id="IPR000936">
    <property type="entry name" value="Alpha_E2_glycop"/>
</dbReference>
<dbReference type="InterPro" id="IPR002533">
    <property type="entry name" value="Alpha_E3_glycop"/>
</dbReference>
<dbReference type="InterPro" id="IPR042304">
    <property type="entry name" value="Alphavir_E2_A"/>
</dbReference>
<dbReference type="InterPro" id="IPR042305">
    <property type="entry name" value="Alphavir_E2_B"/>
</dbReference>
<dbReference type="InterPro" id="IPR042306">
    <property type="entry name" value="Alphavir_E2_C"/>
</dbReference>
<dbReference type="InterPro" id="IPR000336">
    <property type="entry name" value="Flavivir/Alphavir_Ig-like_sf"/>
</dbReference>
<dbReference type="InterPro" id="IPR036253">
    <property type="entry name" value="Glycoprot_cen/dimer_sf"/>
</dbReference>
<dbReference type="InterPro" id="IPR038055">
    <property type="entry name" value="Glycoprot_E_dimer_dom"/>
</dbReference>
<dbReference type="InterPro" id="IPR014756">
    <property type="entry name" value="Ig_E-set"/>
</dbReference>
<dbReference type="InterPro" id="IPR009003">
    <property type="entry name" value="Peptidase_S1_PA"/>
</dbReference>
<dbReference type="InterPro" id="IPR043504">
    <property type="entry name" value="Peptidase_S1_PA_chymotrypsin"/>
</dbReference>
<dbReference type="InterPro" id="IPR000930">
    <property type="entry name" value="Peptidase_S3"/>
</dbReference>
<dbReference type="Pfam" id="PF01589">
    <property type="entry name" value="Alpha_E1_glycop"/>
    <property type="match status" value="1"/>
</dbReference>
<dbReference type="Pfam" id="PF00943">
    <property type="entry name" value="Alpha_E2_glycop"/>
    <property type="match status" value="1"/>
</dbReference>
<dbReference type="Pfam" id="PF01563">
    <property type="entry name" value="Alpha_E3_glycop"/>
    <property type="match status" value="1"/>
</dbReference>
<dbReference type="Pfam" id="PF00944">
    <property type="entry name" value="Peptidase_S3"/>
    <property type="match status" value="1"/>
</dbReference>
<dbReference type="PRINTS" id="PR00798">
    <property type="entry name" value="TOGAVIRIN"/>
</dbReference>
<dbReference type="SUPFAM" id="SSF81296">
    <property type="entry name" value="E set domains"/>
    <property type="match status" value="1"/>
</dbReference>
<dbReference type="SUPFAM" id="SSF50494">
    <property type="entry name" value="Trypsin-like serine proteases"/>
    <property type="match status" value="1"/>
</dbReference>
<dbReference type="SUPFAM" id="SSF56983">
    <property type="entry name" value="Viral glycoprotein, central and dimerisation domains"/>
    <property type="match status" value="1"/>
</dbReference>
<dbReference type="PROSITE" id="PS51690">
    <property type="entry name" value="ALPHAVIRUS_CP"/>
    <property type="match status" value="1"/>
</dbReference>
<evidence type="ECO:0000250" key="1"/>
<evidence type="ECO:0000250" key="2">
    <source>
        <dbReference type="UniProtKB" id="P03315"/>
    </source>
</evidence>
<evidence type="ECO:0000250" key="3">
    <source>
        <dbReference type="UniProtKB" id="P03316"/>
    </source>
</evidence>
<evidence type="ECO:0000250" key="4">
    <source>
        <dbReference type="UniProtKB" id="P09592"/>
    </source>
</evidence>
<evidence type="ECO:0000250" key="5">
    <source>
        <dbReference type="UniProtKB" id="P27284"/>
    </source>
</evidence>
<evidence type="ECO:0000250" key="6">
    <source>
        <dbReference type="UniProtKB" id="Q86925"/>
    </source>
</evidence>
<evidence type="ECO:0000250" key="7">
    <source>
        <dbReference type="UniProtKB" id="Q8JUX5"/>
    </source>
</evidence>
<evidence type="ECO:0000255" key="8"/>
<evidence type="ECO:0000255" key="9">
    <source>
        <dbReference type="PROSITE-ProRule" id="PRU01027"/>
    </source>
</evidence>
<evidence type="ECO:0000256" key="10">
    <source>
        <dbReference type="SAM" id="MobiDB-lite"/>
    </source>
</evidence>
<reference key="1">
    <citation type="submission" date="2005-10" db="EMBL/GenBank/DDBJ databases">
        <title>Eastern equine encephalomyelitis virus strain.</title>
        <authorList>
            <person name="Kondig J.P."/>
            <person name="Turell M.J."/>
            <person name="Lee J.S."/>
            <person name="O'Guinn M.L."/>
            <person name="Wasieloski L.P. Jr."/>
        </authorList>
    </citation>
    <scope>NUCLEOTIDE SEQUENCE [GENOMIC RNA]</scope>
</reference>
<proteinExistence type="inferred from homology"/>
<organism>
    <name type="scientific">Eastern equine encephalitis virus (strain PE-3.0815)</name>
    <name type="common">EEEV</name>
    <name type="synonym">Eastern equine encephalomyelitis virus</name>
    <dbReference type="NCBI Taxonomy" id="374597"/>
    <lineage>
        <taxon>Viruses</taxon>
        <taxon>Riboviria</taxon>
        <taxon>Orthornavirae</taxon>
        <taxon>Kitrinoviricota</taxon>
        <taxon>Alsuviricetes</taxon>
        <taxon>Martellivirales</taxon>
        <taxon>Togaviridae</taxon>
        <taxon>Alphavirus</taxon>
        <taxon>Eastern equine encephalitis virus</taxon>
    </lineage>
</organism>